<evidence type="ECO:0000255" key="1">
    <source>
        <dbReference type="HAMAP-Rule" id="MF_01545"/>
    </source>
</evidence>
<comment type="function">
    <text evidence="1">Forms an efflux pump with AaeA. Could function as a metabolic relief valve, allowing to eliminate certain compounds when they accumulate to high levels in the cell.</text>
</comment>
<comment type="subcellular location">
    <subcellularLocation>
        <location evidence="1">Cell inner membrane</location>
        <topology evidence="1">Multi-pass membrane protein</topology>
    </subcellularLocation>
</comment>
<comment type="similarity">
    <text evidence="1">Belongs to the aromatic acid exporter ArAE (TC 2.A.85) family.</text>
</comment>
<sequence length="650" mass="72449">MTEFLRFPIKLTFALVAALMIGFHLNLETPRWAVMTAGIVAGGTAFAAGGDPYSGALRYRGILRIIGTFIGCVAALVIMIATVRAPVVMLLLCCIWAGFCVWLSSLIKVENSYALGLAGYTALIIVVTANASGGLTLVPQYAVERCSEIILGILCAILADMIFSPRSIKKVIDAEVDSLLVAHYRLLQLCVAHEDKEEVDKAWGALVRRTTALSSMRSQLMMESSRWQNTSRRLQMLNTLSLTMITQAAETFLIQNSRPDYIATQYRVLMEKEAATAEDVHKRMKALRRLIAVSSKTVPETLESWVEAATEYQLLTHGIKSNGRITALEEGILQREVVIQARSAENHHAMINGVRTFVATALGSLFWLYTGWTSGSGCMVMLGVITALAMRMPNPLMMAKDFVYGMTVAVPLGALYFMYILPNTQQSAVLLCIAIGLLGFISGILIQRRQIGTLGAMVGTINVLVLDNPMQFNFTQFIDNALGQWIGSFVALMVILLIRDKSKARTGRKLLNRFMYAAVSAMTTNQARRRENHLPALYQQLFLLLNLFPGDIDKYRIALTLIIGHQRLRAADVPVNADLSAYHRQLRHTADRIISVRSDEKRRYYFERLLKELDVYQHKLAHYDAPTSVTEPVTRLAEMLKKYQNTLVQI</sequence>
<organism>
    <name type="scientific">Pantoea ananatis (strain LMG 20103)</name>
    <dbReference type="NCBI Taxonomy" id="706191"/>
    <lineage>
        <taxon>Bacteria</taxon>
        <taxon>Pseudomonadati</taxon>
        <taxon>Pseudomonadota</taxon>
        <taxon>Gammaproteobacteria</taxon>
        <taxon>Enterobacterales</taxon>
        <taxon>Erwiniaceae</taxon>
        <taxon>Pantoea</taxon>
    </lineage>
</organism>
<accession>D4GCB2</accession>
<feature type="chain" id="PRO_0000414004" description="p-hydroxybenzoic acid efflux pump subunit AaeB">
    <location>
        <begin position="1"/>
        <end position="650"/>
    </location>
</feature>
<feature type="transmembrane region" description="Helical" evidence="1">
    <location>
        <begin position="7"/>
        <end position="27"/>
    </location>
</feature>
<feature type="transmembrane region" description="Helical" evidence="1">
    <location>
        <begin position="32"/>
        <end position="52"/>
    </location>
</feature>
<feature type="transmembrane region" description="Helical" evidence="1">
    <location>
        <begin position="61"/>
        <end position="81"/>
    </location>
</feature>
<feature type="transmembrane region" description="Helical" evidence="1">
    <location>
        <begin position="87"/>
        <end position="107"/>
    </location>
</feature>
<feature type="transmembrane region" description="Helical" evidence="1">
    <location>
        <begin position="115"/>
        <end position="135"/>
    </location>
</feature>
<feature type="transmembrane region" description="Helical" evidence="1">
    <location>
        <begin position="148"/>
        <end position="168"/>
    </location>
</feature>
<feature type="transmembrane region" description="Helical" evidence="1">
    <location>
        <begin position="365"/>
        <end position="385"/>
    </location>
</feature>
<feature type="transmembrane region" description="Helical" evidence="1">
    <location>
        <begin position="402"/>
        <end position="422"/>
    </location>
</feature>
<feature type="transmembrane region" description="Helical" evidence="1">
    <location>
        <begin position="426"/>
        <end position="446"/>
    </location>
</feature>
<feature type="transmembrane region" description="Helical" evidence="1">
    <location>
        <begin position="450"/>
        <end position="470"/>
    </location>
</feature>
<feature type="transmembrane region" description="Helical" evidence="1">
    <location>
        <begin position="478"/>
        <end position="498"/>
    </location>
</feature>
<protein>
    <recommendedName>
        <fullName evidence="1">p-hydroxybenzoic acid efflux pump subunit AaeB</fullName>
        <shortName evidence="1">pHBA efflux pump protein B</shortName>
    </recommendedName>
</protein>
<dbReference type="EMBL" id="CP001875">
    <property type="protein sequence ID" value="ADD78723.1"/>
    <property type="molecule type" value="Genomic_DNA"/>
</dbReference>
<dbReference type="RefSeq" id="WP_013027423.1">
    <property type="nucleotide sequence ID" value="NC_013956.2"/>
</dbReference>
<dbReference type="SMR" id="D4GCB2"/>
<dbReference type="STRING" id="706191.PANA_3556"/>
<dbReference type="KEGG" id="pam:PANA_3556"/>
<dbReference type="eggNOG" id="COG1289">
    <property type="taxonomic scope" value="Bacteria"/>
</dbReference>
<dbReference type="HOGENOM" id="CLU_027647_0_0_6"/>
<dbReference type="Proteomes" id="UP000001702">
    <property type="component" value="Chromosome"/>
</dbReference>
<dbReference type="GO" id="GO:0005886">
    <property type="term" value="C:plasma membrane"/>
    <property type="evidence" value="ECO:0007669"/>
    <property type="project" value="UniProtKB-SubCell"/>
</dbReference>
<dbReference type="GO" id="GO:0022857">
    <property type="term" value="F:transmembrane transporter activity"/>
    <property type="evidence" value="ECO:0007669"/>
    <property type="project" value="UniProtKB-UniRule"/>
</dbReference>
<dbReference type="GO" id="GO:0046942">
    <property type="term" value="P:carboxylic acid transport"/>
    <property type="evidence" value="ECO:0007669"/>
    <property type="project" value="InterPro"/>
</dbReference>
<dbReference type="HAMAP" id="MF_01545">
    <property type="entry name" value="AaeB"/>
    <property type="match status" value="1"/>
</dbReference>
<dbReference type="InterPro" id="IPR006726">
    <property type="entry name" value="PHBA_efflux_AaeB/fusaric-R"/>
</dbReference>
<dbReference type="InterPro" id="IPR023706">
    <property type="entry name" value="PHBA_efflux_pump_AaeB"/>
</dbReference>
<dbReference type="NCBIfam" id="NF007916">
    <property type="entry name" value="PRK10631.1"/>
    <property type="match status" value="1"/>
</dbReference>
<dbReference type="PANTHER" id="PTHR30509:SF9">
    <property type="entry name" value="MULTIDRUG RESISTANCE PROTEIN MDTO"/>
    <property type="match status" value="1"/>
</dbReference>
<dbReference type="PANTHER" id="PTHR30509">
    <property type="entry name" value="P-HYDROXYBENZOIC ACID EFFLUX PUMP SUBUNIT-RELATED"/>
    <property type="match status" value="1"/>
</dbReference>
<dbReference type="Pfam" id="PF04632">
    <property type="entry name" value="FUSC"/>
    <property type="match status" value="1"/>
</dbReference>
<reference key="1">
    <citation type="journal article" date="2010" name="J. Bacteriol.">
        <title>Genome sequence of Pantoea ananatis LMG20103, the causative agent of Eucalyptus blight and dieback.</title>
        <authorList>
            <person name="De Maayer P."/>
            <person name="Chan W.Y."/>
            <person name="Venter S.N."/>
            <person name="Toth I.K."/>
            <person name="Birch P.R."/>
            <person name="Joubert F."/>
            <person name="Coutinho T.A."/>
        </authorList>
    </citation>
    <scope>NUCLEOTIDE SEQUENCE [LARGE SCALE GENOMIC DNA]</scope>
    <source>
        <strain>LMG 20103</strain>
    </source>
</reference>
<name>AAEB_PANAM</name>
<gene>
    <name evidence="1" type="primary">aaeB</name>
    <name type="ordered locus">PANA_3556</name>
</gene>
<keyword id="KW-0997">Cell inner membrane</keyword>
<keyword id="KW-1003">Cell membrane</keyword>
<keyword id="KW-0472">Membrane</keyword>
<keyword id="KW-1185">Reference proteome</keyword>
<keyword id="KW-0812">Transmembrane</keyword>
<keyword id="KW-1133">Transmembrane helix</keyword>
<keyword id="KW-0813">Transport</keyword>
<proteinExistence type="inferred from homology"/>